<feature type="chain" id="PRO_0000183782" description="Cytochrome c oxidase subunit 3">
    <location>
        <begin position="1"/>
        <end position="261"/>
    </location>
</feature>
<feature type="topological domain" description="Mitochondrial matrix" evidence="1">
    <location>
        <begin position="1"/>
        <end position="15"/>
    </location>
</feature>
<feature type="transmembrane region" description="Helical; Name=I" evidence="1">
    <location>
        <begin position="16"/>
        <end position="34"/>
    </location>
</feature>
<feature type="topological domain" description="Mitochondrial intermembrane" evidence="1">
    <location>
        <begin position="35"/>
        <end position="40"/>
    </location>
</feature>
<feature type="transmembrane region" description="Helical; Name=II" evidence="1">
    <location>
        <begin position="41"/>
        <end position="66"/>
    </location>
</feature>
<feature type="topological domain" description="Mitochondrial matrix" evidence="1">
    <location>
        <begin position="67"/>
        <end position="72"/>
    </location>
</feature>
<feature type="transmembrane region" description="Helical; Name=III" evidence="1">
    <location>
        <begin position="73"/>
        <end position="105"/>
    </location>
</feature>
<feature type="topological domain" description="Mitochondrial intermembrane" evidence="1">
    <location>
        <begin position="106"/>
        <end position="128"/>
    </location>
</feature>
<feature type="transmembrane region" description="Helical; Name=IV" evidence="1">
    <location>
        <begin position="129"/>
        <end position="152"/>
    </location>
</feature>
<feature type="topological domain" description="Mitochondrial matrix" evidence="1">
    <location>
        <begin position="153"/>
        <end position="155"/>
    </location>
</feature>
<feature type="transmembrane region" description="Helical; Name=V" evidence="1">
    <location>
        <begin position="156"/>
        <end position="183"/>
    </location>
</feature>
<feature type="topological domain" description="Mitochondrial intermembrane" evidence="1">
    <location>
        <begin position="184"/>
        <end position="190"/>
    </location>
</feature>
<feature type="transmembrane region" description="Helical; Name=VI" evidence="1">
    <location>
        <begin position="191"/>
        <end position="223"/>
    </location>
</feature>
<feature type="topological domain" description="Mitochondrial matrix" evidence="1">
    <location>
        <begin position="224"/>
        <end position="232"/>
    </location>
</feature>
<feature type="transmembrane region" description="Helical; Name=VII" evidence="1">
    <location>
        <begin position="233"/>
        <end position="256"/>
    </location>
</feature>
<feature type="topological domain" description="Mitochondrial intermembrane" evidence="1">
    <location>
        <begin position="257"/>
        <end position="261"/>
    </location>
</feature>
<proteinExistence type="inferred from homology"/>
<organism>
    <name type="scientific">Eudorcas rufifrons</name>
    <name type="common">Red-fronted gazelle</name>
    <name type="synonym">Gazella rufifrons</name>
    <dbReference type="NCBI Taxonomy" id="69304"/>
    <lineage>
        <taxon>Eukaryota</taxon>
        <taxon>Metazoa</taxon>
        <taxon>Chordata</taxon>
        <taxon>Craniata</taxon>
        <taxon>Vertebrata</taxon>
        <taxon>Euteleostomi</taxon>
        <taxon>Mammalia</taxon>
        <taxon>Eutheria</taxon>
        <taxon>Laurasiatheria</taxon>
        <taxon>Artiodactyla</taxon>
        <taxon>Ruminantia</taxon>
        <taxon>Pecora</taxon>
        <taxon>Bovidae</taxon>
        <taxon>Antilopinae</taxon>
        <taxon>Eudorcas</taxon>
    </lineage>
</organism>
<protein>
    <recommendedName>
        <fullName>Cytochrome c oxidase subunit 3</fullName>
        <ecNumber>7.1.1.9</ecNumber>
    </recommendedName>
    <alternativeName>
        <fullName>Cytochrome c oxidase polypeptide III</fullName>
    </alternativeName>
</protein>
<keyword id="KW-0472">Membrane</keyword>
<keyword id="KW-0496">Mitochondrion</keyword>
<keyword id="KW-0999">Mitochondrion inner membrane</keyword>
<keyword id="KW-1278">Translocase</keyword>
<keyword id="KW-0812">Transmembrane</keyword>
<keyword id="KW-1133">Transmembrane helix</keyword>
<geneLocation type="mitochondrion"/>
<evidence type="ECO:0000250" key="1">
    <source>
        <dbReference type="UniProtKB" id="P00415"/>
    </source>
</evidence>
<evidence type="ECO:0000250" key="2">
    <source>
        <dbReference type="UniProtKB" id="P00420"/>
    </source>
</evidence>
<evidence type="ECO:0000305" key="3"/>
<name>COX3_EUDRU</name>
<comment type="function">
    <text evidence="2">Component of the cytochrome c oxidase, the last enzyme in the mitochondrial electron transport chain which drives oxidative phosphorylation. The respiratory chain contains 3 multisubunit complexes succinate dehydrogenase (complex II, CII), ubiquinol-cytochrome c oxidoreductase (cytochrome b-c1 complex, complex III, CIII) and cytochrome c oxidase (complex IV, CIV), that cooperate to transfer electrons derived from NADH and succinate to molecular oxygen, creating an electrochemical gradient over the inner membrane that drives transmembrane transport and the ATP synthase. Cytochrome c oxidase is the component of the respiratory chain that catalyzes the reduction of oxygen to water. Electrons originating from reduced cytochrome c in the intermembrane space (IMS) are transferred via the dinuclear copper A center (CU(A)) of subunit 2 and heme A of subunit 1 to the active site in subunit 1, a binuclear center (BNC) formed by heme A3 and copper B (CU(B)). The BNC reduces molecular oxygen to 2 water molecules using 4 electrons from cytochrome c in the IMS and 4 protons from the mitochondrial matrix.</text>
</comment>
<comment type="catalytic activity">
    <reaction evidence="2">
        <text>4 Fe(II)-[cytochrome c] + O2 + 8 H(+)(in) = 4 Fe(III)-[cytochrome c] + 2 H2O + 4 H(+)(out)</text>
        <dbReference type="Rhea" id="RHEA:11436"/>
        <dbReference type="Rhea" id="RHEA-COMP:10350"/>
        <dbReference type="Rhea" id="RHEA-COMP:14399"/>
        <dbReference type="ChEBI" id="CHEBI:15377"/>
        <dbReference type="ChEBI" id="CHEBI:15378"/>
        <dbReference type="ChEBI" id="CHEBI:15379"/>
        <dbReference type="ChEBI" id="CHEBI:29033"/>
        <dbReference type="ChEBI" id="CHEBI:29034"/>
        <dbReference type="EC" id="7.1.1.9"/>
    </reaction>
    <physiologicalReaction direction="left-to-right" evidence="2">
        <dbReference type="Rhea" id="RHEA:11437"/>
    </physiologicalReaction>
</comment>
<comment type="subunit">
    <text evidence="1">Component of the cytochrome c oxidase (complex IV, CIV), a multisubunit enzyme composed of 14 subunits. The complex is composed of a catalytic core of 3 subunits MT-CO1, MT-CO2 and MT-CO3, encoded in the mitochondrial DNA, and 11 supernumerary subunits COX4I, COX5A, COX5B, COX6A, COX6B, COX6C, COX7A, COX7B, COX7C, COX8 and NDUFA4, which are encoded in the nuclear genome. The complex exists as a monomer or a dimer and forms supercomplexes (SCs) in the inner mitochondrial membrane with NADH-ubiquinone oxidoreductase (complex I, CI) and ubiquinol-cytochrome c oxidoreductase (cytochrome b-c1 complex, complex III, CIII), resulting in different assemblies (supercomplex SCI(1)III(2)IV(1) and megacomplex MCI(2)III(2)IV(2)).</text>
</comment>
<comment type="subcellular location">
    <subcellularLocation>
        <location evidence="1">Mitochondrion inner membrane</location>
        <topology evidence="1">Multi-pass membrane protein</topology>
    </subcellularLocation>
</comment>
<comment type="similarity">
    <text evidence="3">Belongs to the cytochrome c oxidase subunit 3 family.</text>
</comment>
<accession>O47705</accession>
<gene>
    <name type="primary">MT-CO3</name>
    <name type="synonym">COIII</name>
    <name type="synonym">COXIII</name>
    <name type="synonym">MTCO3</name>
</gene>
<dbReference type="EC" id="7.1.1.9"/>
<dbReference type="EMBL" id="AF030472">
    <property type="protein sequence ID" value="AAB93611.1"/>
    <property type="molecule type" value="Genomic_DNA"/>
</dbReference>
<dbReference type="SMR" id="O47705"/>
<dbReference type="GO" id="GO:0005743">
    <property type="term" value="C:mitochondrial inner membrane"/>
    <property type="evidence" value="ECO:0007669"/>
    <property type="project" value="UniProtKB-SubCell"/>
</dbReference>
<dbReference type="GO" id="GO:0045277">
    <property type="term" value="C:respiratory chain complex IV"/>
    <property type="evidence" value="ECO:0000250"/>
    <property type="project" value="UniProtKB"/>
</dbReference>
<dbReference type="GO" id="GO:0004129">
    <property type="term" value="F:cytochrome-c oxidase activity"/>
    <property type="evidence" value="ECO:0007669"/>
    <property type="project" value="UniProtKB-EC"/>
</dbReference>
<dbReference type="GO" id="GO:0006123">
    <property type="term" value="P:mitochondrial electron transport, cytochrome c to oxygen"/>
    <property type="evidence" value="ECO:0007669"/>
    <property type="project" value="TreeGrafter"/>
</dbReference>
<dbReference type="GO" id="GO:0008535">
    <property type="term" value="P:respiratory chain complex IV assembly"/>
    <property type="evidence" value="ECO:0000250"/>
    <property type="project" value="UniProtKB"/>
</dbReference>
<dbReference type="CDD" id="cd01665">
    <property type="entry name" value="Cyt_c_Oxidase_III"/>
    <property type="match status" value="1"/>
</dbReference>
<dbReference type="FunFam" id="1.10.287.70:FF:000048">
    <property type="entry name" value="Cytochrome c oxidase subunit 3"/>
    <property type="match status" value="1"/>
</dbReference>
<dbReference type="FunFam" id="1.20.120.80:FF:000002">
    <property type="entry name" value="Cytochrome c oxidase subunit 3"/>
    <property type="match status" value="1"/>
</dbReference>
<dbReference type="Gene3D" id="1.10.287.70">
    <property type="match status" value="1"/>
</dbReference>
<dbReference type="Gene3D" id="1.20.120.80">
    <property type="entry name" value="Cytochrome c oxidase, subunit III, four-helix bundle"/>
    <property type="match status" value="1"/>
</dbReference>
<dbReference type="InterPro" id="IPR024791">
    <property type="entry name" value="Cyt_c/ubiquinol_Oxase_su3"/>
</dbReference>
<dbReference type="InterPro" id="IPR033945">
    <property type="entry name" value="Cyt_c_oxase_su3_dom"/>
</dbReference>
<dbReference type="InterPro" id="IPR000298">
    <property type="entry name" value="Cyt_c_oxidase-like_su3"/>
</dbReference>
<dbReference type="InterPro" id="IPR035973">
    <property type="entry name" value="Cyt_c_oxidase_su3-like_sf"/>
</dbReference>
<dbReference type="InterPro" id="IPR013833">
    <property type="entry name" value="Cyt_c_oxidase_su3_a-hlx"/>
</dbReference>
<dbReference type="PANTHER" id="PTHR11403:SF7">
    <property type="entry name" value="CYTOCHROME C OXIDASE SUBUNIT 3"/>
    <property type="match status" value="1"/>
</dbReference>
<dbReference type="PANTHER" id="PTHR11403">
    <property type="entry name" value="CYTOCHROME C OXIDASE SUBUNIT III"/>
    <property type="match status" value="1"/>
</dbReference>
<dbReference type="Pfam" id="PF00510">
    <property type="entry name" value="COX3"/>
    <property type="match status" value="1"/>
</dbReference>
<dbReference type="SUPFAM" id="SSF81452">
    <property type="entry name" value="Cytochrome c oxidase subunit III-like"/>
    <property type="match status" value="1"/>
</dbReference>
<dbReference type="PROSITE" id="PS50253">
    <property type="entry name" value="COX3"/>
    <property type="match status" value="1"/>
</dbReference>
<sequence>MTRQTHAYHMVNPSPWPLTGALSALLMTSGLIMWFHFNSTILLMLGLTTNMLTMYQWWRDVIRESTFQGHHTPNVQKGLRYGMILFIISEVLFFTGFFWAFYHSSLAPTPELGGCWPPTGIHPLNPLEVPLLNTSVLLASGVSITWAHHSLMEGNRNHMLQALFITIALGVYFTLLQASEYYEAPFTISDGVYGSTFFVATGFHGLHVIIGSTFLIVCFFRQLKFHFTSNHHFGFEAAAWYWHFVDVVWLFLYVSIYWWGS</sequence>
<reference key="1">
    <citation type="journal article" date="1999" name="Mol. Phylogenet. Evol.">
        <title>Phylogenetic relationships in the bovid subfamily Antilopinae based on mitochondrial DNA sequences.</title>
        <authorList>
            <person name="Rebholz W.E.R."/>
            <person name="Harley E.H."/>
        </authorList>
    </citation>
    <scope>NUCLEOTIDE SEQUENCE [GENOMIC DNA]</scope>
</reference>